<accession>P0A157</accession>
<accession>P31855</accession>
<proteinExistence type="inferred from homology"/>
<comment type="function">
    <text evidence="2">Forms part of the ribosomal stalk which helps the ribosome interact with GTP-bound translation factors. Is thus essential for accurate translation.</text>
</comment>
<comment type="subunit">
    <text evidence="2">Homodimer. Part of the ribosomal stalk of the 50S ribosomal subunit. Forms a multimeric L10(L12)X complex, where L10 forms an elongated spine to which 2 to 4 L12 dimers bind in a sequential fashion. Binds GTP-bound translation factors.</text>
</comment>
<comment type="similarity">
    <text evidence="2">Belongs to the bacterial ribosomal protein bL12 family.</text>
</comment>
<keyword id="KW-1185">Reference proteome</keyword>
<keyword id="KW-0687">Ribonucleoprotein</keyword>
<keyword id="KW-0689">Ribosomal protein</keyword>
<feature type="initiator methionine" description="Removed" evidence="1">
    <location>
        <position position="1"/>
    </location>
</feature>
<feature type="chain" id="PRO_0000157562" description="Large ribosomal subunit protein bL12">
    <location>
        <begin position="2"/>
        <end position="121"/>
    </location>
</feature>
<name>RL7_PSEPK</name>
<reference key="1">
    <citation type="journal article" date="2002" name="Environ. Microbiol.">
        <title>Complete genome sequence and comparative analysis of the metabolically versatile Pseudomonas putida KT2440.</title>
        <authorList>
            <person name="Nelson K.E."/>
            <person name="Weinel C."/>
            <person name="Paulsen I.T."/>
            <person name="Dodson R.J."/>
            <person name="Hilbert H."/>
            <person name="Martins dos Santos V.A.P."/>
            <person name="Fouts D.E."/>
            <person name="Gill S.R."/>
            <person name="Pop M."/>
            <person name="Holmes M."/>
            <person name="Brinkac L.M."/>
            <person name="Beanan M.J."/>
            <person name="DeBoy R.T."/>
            <person name="Daugherty S.C."/>
            <person name="Kolonay J.F."/>
            <person name="Madupu R."/>
            <person name="Nelson W.C."/>
            <person name="White O."/>
            <person name="Peterson J.D."/>
            <person name="Khouri H.M."/>
            <person name="Hance I."/>
            <person name="Chris Lee P."/>
            <person name="Holtzapple E.K."/>
            <person name="Scanlan D."/>
            <person name="Tran K."/>
            <person name="Moazzez A."/>
            <person name="Utterback T.R."/>
            <person name="Rizzo M."/>
            <person name="Lee K."/>
            <person name="Kosack D."/>
            <person name="Moestl D."/>
            <person name="Wedler H."/>
            <person name="Lauber J."/>
            <person name="Stjepandic D."/>
            <person name="Hoheisel J."/>
            <person name="Straetz M."/>
            <person name="Heim S."/>
            <person name="Kiewitz C."/>
            <person name="Eisen J.A."/>
            <person name="Timmis K.N."/>
            <person name="Duesterhoeft A."/>
            <person name="Tuemmler B."/>
            <person name="Fraser C.M."/>
        </authorList>
    </citation>
    <scope>NUCLEOTIDE SEQUENCE [LARGE SCALE GENOMIC DNA]</scope>
    <source>
        <strain>ATCC 47054 / DSM 6125 / CFBP 8728 / NCIMB 11950 / KT2440</strain>
    </source>
</reference>
<evidence type="ECO:0000250" key="1"/>
<evidence type="ECO:0000255" key="2">
    <source>
        <dbReference type="HAMAP-Rule" id="MF_00368"/>
    </source>
</evidence>
<evidence type="ECO:0000305" key="3"/>
<organism>
    <name type="scientific">Pseudomonas putida (strain ATCC 47054 / DSM 6125 / CFBP 8728 / NCIMB 11950 / KT2440)</name>
    <dbReference type="NCBI Taxonomy" id="160488"/>
    <lineage>
        <taxon>Bacteria</taxon>
        <taxon>Pseudomonadati</taxon>
        <taxon>Pseudomonadota</taxon>
        <taxon>Gammaproteobacteria</taxon>
        <taxon>Pseudomonadales</taxon>
        <taxon>Pseudomonadaceae</taxon>
        <taxon>Pseudomonas</taxon>
    </lineage>
</organism>
<dbReference type="EMBL" id="AE015451">
    <property type="protein sequence ID" value="AAN66076.1"/>
    <property type="molecule type" value="Genomic_DNA"/>
</dbReference>
<dbReference type="RefSeq" id="NP_742612.1">
    <property type="nucleotide sequence ID" value="NC_002947.4"/>
</dbReference>
<dbReference type="RefSeq" id="WP_003255496.1">
    <property type="nucleotide sequence ID" value="NZ_CP169744.1"/>
</dbReference>
<dbReference type="SMR" id="P0A157"/>
<dbReference type="STRING" id="160488.PP_0446"/>
<dbReference type="PaxDb" id="160488-PP_0446"/>
<dbReference type="GeneID" id="93675514"/>
<dbReference type="KEGG" id="ppu:PP_0446"/>
<dbReference type="PATRIC" id="fig|160488.4.peg.477"/>
<dbReference type="eggNOG" id="COG0222">
    <property type="taxonomic scope" value="Bacteria"/>
</dbReference>
<dbReference type="HOGENOM" id="CLU_086499_3_2_6"/>
<dbReference type="OrthoDB" id="9811748at2"/>
<dbReference type="PhylomeDB" id="P0A157"/>
<dbReference type="BioCyc" id="PPUT160488:G1G01-490-MONOMER"/>
<dbReference type="Proteomes" id="UP000000556">
    <property type="component" value="Chromosome"/>
</dbReference>
<dbReference type="GO" id="GO:0022625">
    <property type="term" value="C:cytosolic large ribosomal subunit"/>
    <property type="evidence" value="ECO:0007669"/>
    <property type="project" value="TreeGrafter"/>
</dbReference>
<dbReference type="GO" id="GO:0003729">
    <property type="term" value="F:mRNA binding"/>
    <property type="evidence" value="ECO:0007669"/>
    <property type="project" value="TreeGrafter"/>
</dbReference>
<dbReference type="GO" id="GO:0003735">
    <property type="term" value="F:structural constituent of ribosome"/>
    <property type="evidence" value="ECO:0007669"/>
    <property type="project" value="InterPro"/>
</dbReference>
<dbReference type="GO" id="GO:0006412">
    <property type="term" value="P:translation"/>
    <property type="evidence" value="ECO:0007669"/>
    <property type="project" value="UniProtKB-UniRule"/>
</dbReference>
<dbReference type="CDD" id="cd00387">
    <property type="entry name" value="Ribosomal_L7_L12"/>
    <property type="match status" value="1"/>
</dbReference>
<dbReference type="FunFam" id="3.30.1390.10:FF:000001">
    <property type="entry name" value="50S ribosomal protein L7/L12"/>
    <property type="match status" value="1"/>
</dbReference>
<dbReference type="Gene3D" id="3.30.1390.10">
    <property type="match status" value="1"/>
</dbReference>
<dbReference type="Gene3D" id="1.20.5.710">
    <property type="entry name" value="Single helix bin"/>
    <property type="match status" value="1"/>
</dbReference>
<dbReference type="HAMAP" id="MF_00368">
    <property type="entry name" value="Ribosomal_bL12"/>
    <property type="match status" value="1"/>
</dbReference>
<dbReference type="InterPro" id="IPR000206">
    <property type="entry name" value="Ribosomal_bL12"/>
</dbReference>
<dbReference type="InterPro" id="IPR013823">
    <property type="entry name" value="Ribosomal_bL12_C"/>
</dbReference>
<dbReference type="InterPro" id="IPR014719">
    <property type="entry name" value="Ribosomal_bL12_C/ClpS-like"/>
</dbReference>
<dbReference type="InterPro" id="IPR008932">
    <property type="entry name" value="Ribosomal_bL12_oligo"/>
</dbReference>
<dbReference type="InterPro" id="IPR036235">
    <property type="entry name" value="Ribosomal_bL12_oligo_N_sf"/>
</dbReference>
<dbReference type="NCBIfam" id="TIGR00855">
    <property type="entry name" value="L12"/>
    <property type="match status" value="1"/>
</dbReference>
<dbReference type="PANTHER" id="PTHR45987">
    <property type="entry name" value="39S RIBOSOMAL PROTEIN L12"/>
    <property type="match status" value="1"/>
</dbReference>
<dbReference type="PANTHER" id="PTHR45987:SF4">
    <property type="entry name" value="LARGE RIBOSOMAL SUBUNIT PROTEIN BL12M"/>
    <property type="match status" value="1"/>
</dbReference>
<dbReference type="Pfam" id="PF00542">
    <property type="entry name" value="Ribosomal_L12"/>
    <property type="match status" value="1"/>
</dbReference>
<dbReference type="Pfam" id="PF16320">
    <property type="entry name" value="Ribosomal_L12_N"/>
    <property type="match status" value="1"/>
</dbReference>
<dbReference type="SUPFAM" id="SSF54736">
    <property type="entry name" value="ClpS-like"/>
    <property type="match status" value="1"/>
</dbReference>
<dbReference type="SUPFAM" id="SSF48300">
    <property type="entry name" value="Ribosomal protein L7/12, oligomerisation (N-terminal) domain"/>
    <property type="match status" value="1"/>
</dbReference>
<protein>
    <recommendedName>
        <fullName evidence="2">Large ribosomal subunit protein bL12</fullName>
    </recommendedName>
    <alternativeName>
        <fullName evidence="3">50S ribosomal protein L7/L12</fullName>
    </alternativeName>
</protein>
<gene>
    <name evidence="2" type="primary">rplL</name>
    <name type="ordered locus">PP_0446</name>
</gene>
<sequence>MSLTNEQIIEAIGQKTVLEVVELIKAMEETFGVTAAVAAAGPAAAAAVVEEQTEFNVVLVEAGDKKVNVIKAVRELTGLGLKEAKEKVDGAPQVVAEGVSKEAAEDAKKKLEEAGAKVELK</sequence>